<reference key="1">
    <citation type="submission" date="2006-01" db="EMBL/GenBank/DDBJ databases">
        <title>Complete sequence of Anaeromyxobacter dehalogenans 2CP-C.</title>
        <authorList>
            <person name="Copeland A."/>
            <person name="Lucas S."/>
            <person name="Lapidus A."/>
            <person name="Barry K."/>
            <person name="Detter J.C."/>
            <person name="Glavina T."/>
            <person name="Hammon N."/>
            <person name="Israni S."/>
            <person name="Pitluck S."/>
            <person name="Brettin T."/>
            <person name="Bruce D."/>
            <person name="Han C."/>
            <person name="Tapia R."/>
            <person name="Gilna P."/>
            <person name="Kiss H."/>
            <person name="Schmutz J."/>
            <person name="Larimer F."/>
            <person name="Land M."/>
            <person name="Kyrpides N."/>
            <person name="Anderson I."/>
            <person name="Sanford R.A."/>
            <person name="Ritalahti K.M."/>
            <person name="Thomas H.S."/>
            <person name="Kirby J.R."/>
            <person name="Zhulin I.B."/>
            <person name="Loeffler F.E."/>
            <person name="Richardson P."/>
        </authorList>
    </citation>
    <scope>NUCLEOTIDE SEQUENCE [LARGE SCALE GENOMIC DNA]</scope>
    <source>
        <strain>2CP-C</strain>
    </source>
</reference>
<organism>
    <name type="scientific">Anaeromyxobacter dehalogenans (strain 2CP-C)</name>
    <dbReference type="NCBI Taxonomy" id="290397"/>
    <lineage>
        <taxon>Bacteria</taxon>
        <taxon>Pseudomonadati</taxon>
        <taxon>Myxococcota</taxon>
        <taxon>Myxococcia</taxon>
        <taxon>Myxococcales</taxon>
        <taxon>Cystobacterineae</taxon>
        <taxon>Anaeromyxobacteraceae</taxon>
        <taxon>Anaeromyxobacter</taxon>
    </lineage>
</organism>
<proteinExistence type="inferred from homology"/>
<gene>
    <name evidence="1" type="primary">argR</name>
    <name type="ordered locus">Adeh_0586</name>
</gene>
<accession>Q2INH7</accession>
<sequence length="163" mass="16765">MTSADRRRDAVARIIRARRIGTQEELLAALERAGFRATQATLSRDLARLGARRVSGPEGAVYELGADGADGADGGLAALRGLVSSIAANASMVVIRTHPGSAPAIARAIDLAQPPEVLGTIAGDDTIFVAPAGELRPRRLAARLAELLGTPSALAGEGGDRTH</sequence>
<dbReference type="EMBL" id="CP000251">
    <property type="protein sequence ID" value="ABC80362.1"/>
    <property type="molecule type" value="Genomic_DNA"/>
</dbReference>
<dbReference type="RefSeq" id="WP_011419645.1">
    <property type="nucleotide sequence ID" value="NC_007760.1"/>
</dbReference>
<dbReference type="SMR" id="Q2INH7"/>
<dbReference type="STRING" id="290397.Adeh_0586"/>
<dbReference type="KEGG" id="ade:Adeh_0586"/>
<dbReference type="eggNOG" id="COG1438">
    <property type="taxonomic scope" value="Bacteria"/>
</dbReference>
<dbReference type="HOGENOM" id="CLU_097103_1_1_7"/>
<dbReference type="OrthoDB" id="7060358at2"/>
<dbReference type="UniPathway" id="UPA00068"/>
<dbReference type="Proteomes" id="UP000001935">
    <property type="component" value="Chromosome"/>
</dbReference>
<dbReference type="GO" id="GO:0005737">
    <property type="term" value="C:cytoplasm"/>
    <property type="evidence" value="ECO:0007669"/>
    <property type="project" value="UniProtKB-SubCell"/>
</dbReference>
<dbReference type="GO" id="GO:0034618">
    <property type="term" value="F:arginine binding"/>
    <property type="evidence" value="ECO:0007669"/>
    <property type="project" value="InterPro"/>
</dbReference>
<dbReference type="GO" id="GO:0003677">
    <property type="term" value="F:DNA binding"/>
    <property type="evidence" value="ECO:0007669"/>
    <property type="project" value="UniProtKB-KW"/>
</dbReference>
<dbReference type="GO" id="GO:0003700">
    <property type="term" value="F:DNA-binding transcription factor activity"/>
    <property type="evidence" value="ECO:0007669"/>
    <property type="project" value="UniProtKB-UniRule"/>
</dbReference>
<dbReference type="GO" id="GO:0006526">
    <property type="term" value="P:L-arginine biosynthetic process"/>
    <property type="evidence" value="ECO:0007669"/>
    <property type="project" value="UniProtKB-UniPathway"/>
</dbReference>
<dbReference type="GO" id="GO:0051259">
    <property type="term" value="P:protein complex oligomerization"/>
    <property type="evidence" value="ECO:0007669"/>
    <property type="project" value="InterPro"/>
</dbReference>
<dbReference type="GO" id="GO:1900079">
    <property type="term" value="P:regulation of arginine biosynthetic process"/>
    <property type="evidence" value="ECO:0007669"/>
    <property type="project" value="UniProtKB-UniRule"/>
</dbReference>
<dbReference type="Gene3D" id="3.30.1360.40">
    <property type="match status" value="1"/>
</dbReference>
<dbReference type="Gene3D" id="1.10.10.10">
    <property type="entry name" value="Winged helix-like DNA-binding domain superfamily/Winged helix DNA-binding domain"/>
    <property type="match status" value="1"/>
</dbReference>
<dbReference type="HAMAP" id="MF_00173">
    <property type="entry name" value="Arg_repressor"/>
    <property type="match status" value="1"/>
</dbReference>
<dbReference type="InterPro" id="IPR001669">
    <property type="entry name" value="Arg_repress"/>
</dbReference>
<dbReference type="InterPro" id="IPR020899">
    <property type="entry name" value="Arg_repress_C"/>
</dbReference>
<dbReference type="InterPro" id="IPR036251">
    <property type="entry name" value="Arg_repress_C_sf"/>
</dbReference>
<dbReference type="InterPro" id="IPR020900">
    <property type="entry name" value="Arg_repress_DNA-bd"/>
</dbReference>
<dbReference type="InterPro" id="IPR036388">
    <property type="entry name" value="WH-like_DNA-bd_sf"/>
</dbReference>
<dbReference type="InterPro" id="IPR036390">
    <property type="entry name" value="WH_DNA-bd_sf"/>
</dbReference>
<dbReference type="PANTHER" id="PTHR34471">
    <property type="entry name" value="ARGININE REPRESSOR"/>
    <property type="match status" value="1"/>
</dbReference>
<dbReference type="PANTHER" id="PTHR34471:SF1">
    <property type="entry name" value="ARGININE REPRESSOR"/>
    <property type="match status" value="1"/>
</dbReference>
<dbReference type="Pfam" id="PF01316">
    <property type="entry name" value="Arg_repressor"/>
    <property type="match status" value="1"/>
</dbReference>
<dbReference type="Pfam" id="PF02863">
    <property type="entry name" value="Arg_repressor_C"/>
    <property type="match status" value="1"/>
</dbReference>
<dbReference type="PRINTS" id="PR01467">
    <property type="entry name" value="ARGREPRESSOR"/>
</dbReference>
<dbReference type="SUPFAM" id="SSF55252">
    <property type="entry name" value="C-terminal domain of arginine repressor"/>
    <property type="match status" value="1"/>
</dbReference>
<dbReference type="SUPFAM" id="SSF46785">
    <property type="entry name" value="Winged helix' DNA-binding domain"/>
    <property type="match status" value="1"/>
</dbReference>
<keyword id="KW-0028">Amino-acid biosynthesis</keyword>
<keyword id="KW-0055">Arginine biosynthesis</keyword>
<keyword id="KW-0963">Cytoplasm</keyword>
<keyword id="KW-0238">DNA-binding</keyword>
<keyword id="KW-1185">Reference proteome</keyword>
<keyword id="KW-0678">Repressor</keyword>
<keyword id="KW-0804">Transcription</keyword>
<keyword id="KW-0805">Transcription regulation</keyword>
<comment type="function">
    <text evidence="1">Regulates arginine biosynthesis genes.</text>
</comment>
<comment type="pathway">
    <text>Amino-acid biosynthesis; L-arginine biosynthesis [regulation].</text>
</comment>
<comment type="subcellular location">
    <subcellularLocation>
        <location evidence="1">Cytoplasm</location>
    </subcellularLocation>
</comment>
<comment type="similarity">
    <text evidence="1">Belongs to the ArgR family.</text>
</comment>
<name>ARGR_ANADE</name>
<protein>
    <recommendedName>
        <fullName evidence="1">Arginine repressor</fullName>
    </recommendedName>
</protein>
<feature type="chain" id="PRO_1000023543" description="Arginine repressor">
    <location>
        <begin position="1"/>
        <end position="163"/>
    </location>
</feature>
<evidence type="ECO:0000255" key="1">
    <source>
        <dbReference type="HAMAP-Rule" id="MF_00173"/>
    </source>
</evidence>